<dbReference type="EC" id="3.4.21.92" evidence="1"/>
<dbReference type="EMBL" id="CP000425">
    <property type="protein sequence ID" value="ABJ72263.1"/>
    <property type="molecule type" value="Genomic_DNA"/>
</dbReference>
<dbReference type="RefSeq" id="WP_011675637.1">
    <property type="nucleotide sequence ID" value="NC_008527.1"/>
</dbReference>
<dbReference type="SMR" id="Q030V9"/>
<dbReference type="MEROPS" id="S14.001"/>
<dbReference type="KEGG" id="llc:LACR_0700"/>
<dbReference type="HOGENOM" id="CLU_058707_3_2_9"/>
<dbReference type="Proteomes" id="UP000000240">
    <property type="component" value="Chromosome"/>
</dbReference>
<dbReference type="GO" id="GO:0005737">
    <property type="term" value="C:cytoplasm"/>
    <property type="evidence" value="ECO:0007669"/>
    <property type="project" value="UniProtKB-SubCell"/>
</dbReference>
<dbReference type="GO" id="GO:0009368">
    <property type="term" value="C:endopeptidase Clp complex"/>
    <property type="evidence" value="ECO:0007669"/>
    <property type="project" value="TreeGrafter"/>
</dbReference>
<dbReference type="GO" id="GO:0004176">
    <property type="term" value="F:ATP-dependent peptidase activity"/>
    <property type="evidence" value="ECO:0007669"/>
    <property type="project" value="InterPro"/>
</dbReference>
<dbReference type="GO" id="GO:0051117">
    <property type="term" value="F:ATPase binding"/>
    <property type="evidence" value="ECO:0007669"/>
    <property type="project" value="TreeGrafter"/>
</dbReference>
<dbReference type="GO" id="GO:0004252">
    <property type="term" value="F:serine-type endopeptidase activity"/>
    <property type="evidence" value="ECO:0007669"/>
    <property type="project" value="UniProtKB-UniRule"/>
</dbReference>
<dbReference type="GO" id="GO:0006515">
    <property type="term" value="P:protein quality control for misfolded or incompletely synthesized proteins"/>
    <property type="evidence" value="ECO:0007669"/>
    <property type="project" value="TreeGrafter"/>
</dbReference>
<dbReference type="CDD" id="cd07017">
    <property type="entry name" value="S14_ClpP_2"/>
    <property type="match status" value="1"/>
</dbReference>
<dbReference type="FunFam" id="3.90.226.10:FF:000014">
    <property type="entry name" value="ATP-dependent Clp protease proteolytic subunit"/>
    <property type="match status" value="1"/>
</dbReference>
<dbReference type="Gene3D" id="3.90.226.10">
    <property type="entry name" value="2-enoyl-CoA Hydratase, Chain A, domain 1"/>
    <property type="match status" value="1"/>
</dbReference>
<dbReference type="HAMAP" id="MF_00444">
    <property type="entry name" value="ClpP"/>
    <property type="match status" value="1"/>
</dbReference>
<dbReference type="InterPro" id="IPR001907">
    <property type="entry name" value="ClpP"/>
</dbReference>
<dbReference type="InterPro" id="IPR029045">
    <property type="entry name" value="ClpP/crotonase-like_dom_sf"/>
</dbReference>
<dbReference type="InterPro" id="IPR023562">
    <property type="entry name" value="ClpP/TepA"/>
</dbReference>
<dbReference type="InterPro" id="IPR033135">
    <property type="entry name" value="ClpP_His_AS"/>
</dbReference>
<dbReference type="InterPro" id="IPR018215">
    <property type="entry name" value="ClpP_Ser_AS"/>
</dbReference>
<dbReference type="NCBIfam" id="NF001368">
    <property type="entry name" value="PRK00277.1"/>
    <property type="match status" value="1"/>
</dbReference>
<dbReference type="NCBIfam" id="NF009205">
    <property type="entry name" value="PRK12553.1"/>
    <property type="match status" value="1"/>
</dbReference>
<dbReference type="PANTHER" id="PTHR10381">
    <property type="entry name" value="ATP-DEPENDENT CLP PROTEASE PROTEOLYTIC SUBUNIT"/>
    <property type="match status" value="1"/>
</dbReference>
<dbReference type="PANTHER" id="PTHR10381:SF70">
    <property type="entry name" value="ATP-DEPENDENT CLP PROTEASE PROTEOLYTIC SUBUNIT"/>
    <property type="match status" value="1"/>
</dbReference>
<dbReference type="Pfam" id="PF00574">
    <property type="entry name" value="CLP_protease"/>
    <property type="match status" value="1"/>
</dbReference>
<dbReference type="PRINTS" id="PR00127">
    <property type="entry name" value="CLPPROTEASEP"/>
</dbReference>
<dbReference type="SUPFAM" id="SSF52096">
    <property type="entry name" value="ClpP/crotonase"/>
    <property type="match status" value="1"/>
</dbReference>
<dbReference type="PROSITE" id="PS00382">
    <property type="entry name" value="CLP_PROTEASE_HIS"/>
    <property type="match status" value="1"/>
</dbReference>
<dbReference type="PROSITE" id="PS00381">
    <property type="entry name" value="CLP_PROTEASE_SER"/>
    <property type="match status" value="1"/>
</dbReference>
<protein>
    <recommendedName>
        <fullName evidence="1">ATP-dependent Clp protease proteolytic subunit</fullName>
        <ecNumber evidence="1">3.4.21.92</ecNumber>
    </recommendedName>
    <alternativeName>
        <fullName evidence="1">Endopeptidase Clp</fullName>
    </alternativeName>
</protein>
<name>CLPP_LACLS</name>
<reference key="1">
    <citation type="journal article" date="2006" name="Proc. Natl. Acad. Sci. U.S.A.">
        <title>Comparative genomics of the lactic acid bacteria.</title>
        <authorList>
            <person name="Makarova K.S."/>
            <person name="Slesarev A."/>
            <person name="Wolf Y.I."/>
            <person name="Sorokin A."/>
            <person name="Mirkin B."/>
            <person name="Koonin E.V."/>
            <person name="Pavlov A."/>
            <person name="Pavlova N."/>
            <person name="Karamychev V."/>
            <person name="Polouchine N."/>
            <person name="Shakhova V."/>
            <person name="Grigoriev I."/>
            <person name="Lou Y."/>
            <person name="Rohksar D."/>
            <person name="Lucas S."/>
            <person name="Huang K."/>
            <person name="Goodstein D.M."/>
            <person name="Hawkins T."/>
            <person name="Plengvidhya V."/>
            <person name="Welker D."/>
            <person name="Hughes J."/>
            <person name="Goh Y."/>
            <person name="Benson A."/>
            <person name="Baldwin K."/>
            <person name="Lee J.-H."/>
            <person name="Diaz-Muniz I."/>
            <person name="Dosti B."/>
            <person name="Smeianov V."/>
            <person name="Wechter W."/>
            <person name="Barabote R."/>
            <person name="Lorca G."/>
            <person name="Altermann E."/>
            <person name="Barrangou R."/>
            <person name="Ganesan B."/>
            <person name="Xie Y."/>
            <person name="Rawsthorne H."/>
            <person name="Tamir D."/>
            <person name="Parker C."/>
            <person name="Breidt F."/>
            <person name="Broadbent J.R."/>
            <person name="Hutkins R."/>
            <person name="O'Sullivan D."/>
            <person name="Steele J."/>
            <person name="Unlu G."/>
            <person name="Saier M.H. Jr."/>
            <person name="Klaenhammer T."/>
            <person name="Richardson P."/>
            <person name="Kozyavkin S."/>
            <person name="Weimer B.C."/>
            <person name="Mills D.A."/>
        </authorList>
    </citation>
    <scope>NUCLEOTIDE SEQUENCE [LARGE SCALE GENOMIC DNA]</scope>
    <source>
        <strain>SK11</strain>
    </source>
</reference>
<gene>
    <name evidence="1" type="primary">clpP</name>
    <name type="ordered locus">LACR_0700</name>
</gene>
<evidence type="ECO:0000255" key="1">
    <source>
        <dbReference type="HAMAP-Rule" id="MF_00444"/>
    </source>
</evidence>
<proteinExistence type="inferred from homology"/>
<feature type="chain" id="PRO_1000026104" description="ATP-dependent Clp protease proteolytic subunit">
    <location>
        <begin position="1"/>
        <end position="199"/>
    </location>
</feature>
<feature type="active site" description="Nucleophile" evidence="1">
    <location>
        <position position="99"/>
    </location>
</feature>
<feature type="active site" evidence="1">
    <location>
        <position position="124"/>
    </location>
</feature>
<organism>
    <name type="scientific">Lactococcus lactis subsp. cremoris (strain SK11)</name>
    <dbReference type="NCBI Taxonomy" id="272622"/>
    <lineage>
        <taxon>Bacteria</taxon>
        <taxon>Bacillati</taxon>
        <taxon>Bacillota</taxon>
        <taxon>Bacilli</taxon>
        <taxon>Lactobacillales</taxon>
        <taxon>Streptococcaceae</taxon>
        <taxon>Lactococcus</taxon>
        <taxon>Lactococcus cremoris subsp. cremoris</taxon>
    </lineage>
</organism>
<comment type="function">
    <text evidence="1">Cleaves peptides in various proteins in a process that requires ATP hydrolysis. Has a chymotrypsin-like activity. Plays a major role in the degradation of misfolded proteins.</text>
</comment>
<comment type="catalytic activity">
    <reaction evidence="1">
        <text>Hydrolysis of proteins to small peptides in the presence of ATP and magnesium. alpha-casein is the usual test substrate. In the absence of ATP, only oligopeptides shorter than five residues are hydrolyzed (such as succinyl-Leu-Tyr-|-NHMec, and Leu-Tyr-Leu-|-Tyr-Trp, in which cleavage of the -Tyr-|-Leu- and -Tyr-|-Trp bonds also occurs).</text>
        <dbReference type="EC" id="3.4.21.92"/>
    </reaction>
</comment>
<comment type="subunit">
    <text evidence="1">Fourteen ClpP subunits assemble into 2 heptameric rings which stack back to back to give a disk-like structure with a central cavity, resembling the structure of eukaryotic proteasomes.</text>
</comment>
<comment type="subcellular location">
    <subcellularLocation>
        <location evidence="1">Cytoplasm</location>
    </subcellularLocation>
</comment>
<comment type="similarity">
    <text evidence="1">Belongs to the peptidase S14 family.</text>
</comment>
<accession>Q030V9</accession>
<keyword id="KW-0963">Cytoplasm</keyword>
<keyword id="KW-0378">Hydrolase</keyword>
<keyword id="KW-0645">Protease</keyword>
<keyword id="KW-0720">Serine protease</keyword>
<sequence>MGYLVPTVIEQSSRGERAYDIYSRLLKDRIIMLTGPVEDGMANSIIAQLLFLDAQDNTKDIYLYVNTPGGSVSAGLAIVDTMNFIKSDVLTIVMGMAASMGTIIASSGTKGKRFMLPNAEYLIHQPMGGAGQGTQQTDMAIVAEQLLKTRKRLEQILADNSNRSLEQIHKDAERDHWMDAKETLEYGFIDEIMENNSLK</sequence>